<gene>
    <name evidence="1" type="primary">ftsY</name>
    <name type="ordered locus">BUsg_025</name>
</gene>
<evidence type="ECO:0000255" key="1">
    <source>
        <dbReference type="HAMAP-Rule" id="MF_00920"/>
    </source>
</evidence>
<organism>
    <name type="scientific">Buchnera aphidicola subsp. Schizaphis graminum (strain Sg)</name>
    <dbReference type="NCBI Taxonomy" id="198804"/>
    <lineage>
        <taxon>Bacteria</taxon>
        <taxon>Pseudomonadati</taxon>
        <taxon>Pseudomonadota</taxon>
        <taxon>Gammaproteobacteria</taxon>
        <taxon>Enterobacterales</taxon>
        <taxon>Erwiniaceae</taxon>
        <taxon>Buchnera</taxon>
    </lineage>
</organism>
<feature type="chain" id="PRO_0000101129" description="Signal recognition particle receptor FtsY">
    <location>
        <begin position="1"/>
        <end position="351"/>
    </location>
</feature>
<feature type="binding site" evidence="1">
    <location>
        <begin position="156"/>
        <end position="163"/>
    </location>
    <ligand>
        <name>GTP</name>
        <dbReference type="ChEBI" id="CHEBI:37565"/>
    </ligand>
</feature>
<feature type="binding site" evidence="1">
    <location>
        <begin position="238"/>
        <end position="242"/>
    </location>
    <ligand>
        <name>GTP</name>
        <dbReference type="ChEBI" id="CHEBI:37565"/>
    </ligand>
</feature>
<feature type="binding site" evidence="1">
    <location>
        <begin position="302"/>
        <end position="305"/>
    </location>
    <ligand>
        <name>GTP</name>
        <dbReference type="ChEBI" id="CHEBI:37565"/>
    </ligand>
</feature>
<protein>
    <recommendedName>
        <fullName evidence="1">Signal recognition particle receptor FtsY</fullName>
        <shortName evidence="1">SRP receptor</shortName>
        <ecNumber evidence="1">3.6.5.4</ecNumber>
    </recommendedName>
</protein>
<keyword id="KW-1003">Cell membrane</keyword>
<keyword id="KW-0963">Cytoplasm</keyword>
<keyword id="KW-0342">GTP-binding</keyword>
<keyword id="KW-0378">Hydrolase</keyword>
<keyword id="KW-0472">Membrane</keyword>
<keyword id="KW-0547">Nucleotide-binding</keyword>
<keyword id="KW-0675">Receptor</keyword>
<name>FTSY_BUCAP</name>
<comment type="function">
    <text evidence="1">Involved in targeting and insertion of nascent membrane proteins into the cytoplasmic membrane. Acts as a receptor for the complex formed by the signal recognition particle (SRP) and the ribosome-nascent chain (RNC). Interaction with SRP-RNC leads to the transfer of the RNC complex to the Sec translocase for insertion into the membrane, the hydrolysis of GTP by both Ffh and FtsY, and the dissociation of the SRP-FtsY complex into the individual components.</text>
</comment>
<comment type="catalytic activity">
    <reaction evidence="1">
        <text>GTP + H2O = GDP + phosphate + H(+)</text>
        <dbReference type="Rhea" id="RHEA:19669"/>
        <dbReference type="ChEBI" id="CHEBI:15377"/>
        <dbReference type="ChEBI" id="CHEBI:15378"/>
        <dbReference type="ChEBI" id="CHEBI:37565"/>
        <dbReference type="ChEBI" id="CHEBI:43474"/>
        <dbReference type="ChEBI" id="CHEBI:58189"/>
        <dbReference type="EC" id="3.6.5.4"/>
    </reaction>
</comment>
<comment type="subunit">
    <text evidence="1">Part of the signal recognition particle protein translocation system, which is composed of SRP and FtsY. SRP is a ribonucleoprotein composed of Ffh and a 4.5S RNA molecule.</text>
</comment>
<comment type="subcellular location">
    <subcellularLocation>
        <location>Cell membrane</location>
        <topology>Peripheral membrane protein</topology>
        <orientation>Cytoplasmic side</orientation>
    </subcellularLocation>
    <subcellularLocation>
        <location evidence="1">Cytoplasm</location>
    </subcellularLocation>
</comment>
<comment type="similarity">
    <text evidence="1">Belongs to the GTP-binding SRP family. FtsY subfamily.</text>
</comment>
<dbReference type="EC" id="3.6.5.4" evidence="1"/>
<dbReference type="EMBL" id="AE013218">
    <property type="protein sequence ID" value="AAM67596.1"/>
    <property type="molecule type" value="Genomic_DNA"/>
</dbReference>
<dbReference type="RefSeq" id="WP_011053562.1">
    <property type="nucleotide sequence ID" value="NC_004061.1"/>
</dbReference>
<dbReference type="SMR" id="Q8KA77"/>
<dbReference type="STRING" id="198804.BUsg_025"/>
<dbReference type="GeneID" id="93003488"/>
<dbReference type="KEGG" id="bas:BUsg_025"/>
<dbReference type="eggNOG" id="COG0552">
    <property type="taxonomic scope" value="Bacteria"/>
</dbReference>
<dbReference type="HOGENOM" id="CLU_009301_3_0_6"/>
<dbReference type="Proteomes" id="UP000000416">
    <property type="component" value="Chromosome"/>
</dbReference>
<dbReference type="GO" id="GO:0005737">
    <property type="term" value="C:cytoplasm"/>
    <property type="evidence" value="ECO:0007669"/>
    <property type="project" value="UniProtKB-SubCell"/>
</dbReference>
<dbReference type="GO" id="GO:0005886">
    <property type="term" value="C:plasma membrane"/>
    <property type="evidence" value="ECO:0007669"/>
    <property type="project" value="UniProtKB-SubCell"/>
</dbReference>
<dbReference type="GO" id="GO:0016887">
    <property type="term" value="F:ATP hydrolysis activity"/>
    <property type="evidence" value="ECO:0007669"/>
    <property type="project" value="InterPro"/>
</dbReference>
<dbReference type="GO" id="GO:0005525">
    <property type="term" value="F:GTP binding"/>
    <property type="evidence" value="ECO:0007669"/>
    <property type="project" value="UniProtKB-UniRule"/>
</dbReference>
<dbReference type="GO" id="GO:0003924">
    <property type="term" value="F:GTPase activity"/>
    <property type="evidence" value="ECO:0007669"/>
    <property type="project" value="UniProtKB-UniRule"/>
</dbReference>
<dbReference type="GO" id="GO:0005047">
    <property type="term" value="F:signal recognition particle binding"/>
    <property type="evidence" value="ECO:0007669"/>
    <property type="project" value="TreeGrafter"/>
</dbReference>
<dbReference type="GO" id="GO:0006614">
    <property type="term" value="P:SRP-dependent cotranslational protein targeting to membrane"/>
    <property type="evidence" value="ECO:0007669"/>
    <property type="project" value="InterPro"/>
</dbReference>
<dbReference type="CDD" id="cd17874">
    <property type="entry name" value="FtsY"/>
    <property type="match status" value="1"/>
</dbReference>
<dbReference type="FunFam" id="1.20.120.140:FF:000002">
    <property type="entry name" value="Signal recognition particle receptor FtsY"/>
    <property type="match status" value="1"/>
</dbReference>
<dbReference type="FunFam" id="3.40.50.300:FF:000053">
    <property type="entry name" value="Signal recognition particle receptor FtsY"/>
    <property type="match status" value="1"/>
</dbReference>
<dbReference type="Gene3D" id="3.40.50.300">
    <property type="entry name" value="P-loop containing nucleotide triphosphate hydrolases"/>
    <property type="match status" value="1"/>
</dbReference>
<dbReference type="Gene3D" id="1.20.120.140">
    <property type="entry name" value="Signal recognition particle SRP54, nucleotide-binding domain"/>
    <property type="match status" value="1"/>
</dbReference>
<dbReference type="HAMAP" id="MF_00920">
    <property type="entry name" value="FtsY"/>
    <property type="match status" value="1"/>
</dbReference>
<dbReference type="InterPro" id="IPR003593">
    <property type="entry name" value="AAA+_ATPase"/>
</dbReference>
<dbReference type="InterPro" id="IPR027417">
    <property type="entry name" value="P-loop_NTPase"/>
</dbReference>
<dbReference type="InterPro" id="IPR013822">
    <property type="entry name" value="Signal_recog_particl_SRP54_hlx"/>
</dbReference>
<dbReference type="InterPro" id="IPR004390">
    <property type="entry name" value="SR_rcpt_FtsY"/>
</dbReference>
<dbReference type="InterPro" id="IPR036225">
    <property type="entry name" value="SRP/SRP_N"/>
</dbReference>
<dbReference type="InterPro" id="IPR000897">
    <property type="entry name" value="SRP54_GTPase_dom"/>
</dbReference>
<dbReference type="InterPro" id="IPR042101">
    <property type="entry name" value="SRP54_N_sf"/>
</dbReference>
<dbReference type="NCBIfam" id="TIGR00064">
    <property type="entry name" value="ftsY"/>
    <property type="match status" value="1"/>
</dbReference>
<dbReference type="PANTHER" id="PTHR43134">
    <property type="entry name" value="SIGNAL RECOGNITION PARTICLE RECEPTOR SUBUNIT ALPHA"/>
    <property type="match status" value="1"/>
</dbReference>
<dbReference type="PANTHER" id="PTHR43134:SF1">
    <property type="entry name" value="SIGNAL RECOGNITION PARTICLE RECEPTOR SUBUNIT ALPHA"/>
    <property type="match status" value="1"/>
</dbReference>
<dbReference type="Pfam" id="PF00448">
    <property type="entry name" value="SRP54"/>
    <property type="match status" value="1"/>
</dbReference>
<dbReference type="Pfam" id="PF02881">
    <property type="entry name" value="SRP54_N"/>
    <property type="match status" value="1"/>
</dbReference>
<dbReference type="SMART" id="SM00382">
    <property type="entry name" value="AAA"/>
    <property type="match status" value="1"/>
</dbReference>
<dbReference type="SMART" id="SM00962">
    <property type="entry name" value="SRP54"/>
    <property type="match status" value="1"/>
</dbReference>
<dbReference type="SMART" id="SM00963">
    <property type="entry name" value="SRP54_N"/>
    <property type="match status" value="1"/>
</dbReference>
<dbReference type="SUPFAM" id="SSF47364">
    <property type="entry name" value="Domain of the SRP/SRP receptor G-proteins"/>
    <property type="match status" value="1"/>
</dbReference>
<dbReference type="SUPFAM" id="SSF52540">
    <property type="entry name" value="P-loop containing nucleoside triphosphate hydrolases"/>
    <property type="match status" value="1"/>
</dbReference>
<dbReference type="PROSITE" id="PS00300">
    <property type="entry name" value="SRP54"/>
    <property type="match status" value="1"/>
</dbReference>
<sequence>MNFDKKNSFFSWINSKIKKNNKKEKKENILLKKEKEGIHTIQNIDNKKIDFLFKLKNSLNKTKQFFGDSISRIFLSKKIDDAFFEELEDTMLLSDIGVHTTDQIISKLINDATHKELKNPEKVYFLLKEHMYSILNRVEKPLKISNHTPFVILVVGINGTGKTTTVSKLAKKYKLAGKSVMLAAADTFRAAGIEQLQILGKRNNIPVISQSSGSDPASVAFDAVKSAISKKIDVLIIDTAGRLHNKLHLLEELKKMVRVIKKLNLSAPHEIMLIIDACNGQNTIKQTEMFHKAINLTGLVITKLDGTAKGGVIFSLANQFLIPIRYIGIGEKTTDLVVFNSNDFIKSIFVK</sequence>
<reference key="1">
    <citation type="journal article" date="2002" name="Science">
        <title>50 million years of genomic stasis in endosymbiotic bacteria.</title>
        <authorList>
            <person name="Tamas I."/>
            <person name="Klasson L."/>
            <person name="Canbaeck B."/>
            <person name="Naeslund A.K."/>
            <person name="Eriksson A.-S."/>
            <person name="Wernegreen J.J."/>
            <person name="Sandstroem J.P."/>
            <person name="Moran N.A."/>
            <person name="Andersson S.G.E."/>
        </authorList>
    </citation>
    <scope>NUCLEOTIDE SEQUENCE [LARGE SCALE GENOMIC DNA]</scope>
    <source>
        <strain>Sg</strain>
    </source>
</reference>
<accession>Q8KA77</accession>
<proteinExistence type="inferred from homology"/>